<accession>P56536</accession>
<accession>G3V6L4</accession>
<dbReference type="EC" id="3.6.4.-" evidence="8"/>
<dbReference type="EMBL" id="CH473983">
    <property type="protein sequence ID" value="EDM00464.1"/>
    <property type="molecule type" value="Genomic_DNA"/>
</dbReference>
<dbReference type="RefSeq" id="NP_001101200.1">
    <property type="nucleotide sequence ID" value="NM_001107730.1"/>
</dbReference>
<dbReference type="RefSeq" id="XP_063139618.1">
    <property type="nucleotide sequence ID" value="XM_063283548.1"/>
</dbReference>
<dbReference type="RefSeq" id="XP_063139619.1">
    <property type="nucleotide sequence ID" value="XM_063283549.1"/>
</dbReference>
<dbReference type="PDB" id="2KIN">
    <property type="method" value="X-ray"/>
    <property type="resolution" value="2.00 A"/>
    <property type="chains" value="A=2-239"/>
</dbReference>
<dbReference type="PDB" id="3KIN">
    <property type="method" value="X-ray"/>
    <property type="resolution" value="3.10 A"/>
    <property type="chains" value="A/C=2-239"/>
</dbReference>
<dbReference type="PDB" id="5HLE">
    <property type="method" value="X-ray"/>
    <property type="resolution" value="2.90 A"/>
    <property type="chains" value="A=10-320"/>
</dbReference>
<dbReference type="PDB" id="5HNW">
    <property type="method" value="EM"/>
    <property type="resolution" value="6.60 A"/>
    <property type="chains" value="K=10-320"/>
</dbReference>
<dbReference type="PDB" id="5HNX">
    <property type="method" value="EM"/>
    <property type="resolution" value="6.60 A"/>
    <property type="chains" value="K=10-320"/>
</dbReference>
<dbReference type="PDB" id="5HNY">
    <property type="method" value="EM"/>
    <property type="resolution" value="6.30 A"/>
    <property type="chains" value="K=10-320"/>
</dbReference>
<dbReference type="PDB" id="5HNZ">
    <property type="method" value="EM"/>
    <property type="resolution" value="5.80 A"/>
    <property type="chains" value="K=10-320"/>
</dbReference>
<dbReference type="PDB" id="8TT7">
    <property type="method" value="NMR"/>
    <property type="chains" value="A/B=325-376"/>
</dbReference>
<dbReference type="PDBsum" id="2KIN"/>
<dbReference type="PDBsum" id="3KIN"/>
<dbReference type="PDBsum" id="5HLE"/>
<dbReference type="PDBsum" id="5HNW"/>
<dbReference type="PDBsum" id="5HNX"/>
<dbReference type="PDBsum" id="5HNY"/>
<dbReference type="PDBsum" id="5HNZ"/>
<dbReference type="PDBsum" id="8TT7"/>
<dbReference type="EMDB" id="EMD-8058"/>
<dbReference type="SMR" id="P56536"/>
<dbReference type="FunCoup" id="P56536">
    <property type="interactions" value="220"/>
</dbReference>
<dbReference type="IntAct" id="P56536">
    <property type="interactions" value="8"/>
</dbReference>
<dbReference type="MINT" id="P56536"/>
<dbReference type="STRING" id="10116.ENSRNOP00000006341"/>
<dbReference type="PhosphoSitePlus" id="P56536"/>
<dbReference type="jPOST" id="P56536"/>
<dbReference type="PaxDb" id="10116-ENSRNOP00000006341"/>
<dbReference type="PeptideAtlas" id="P56536"/>
<dbReference type="Ensembl" id="ENSRNOT00000006341.8">
    <property type="protein sequence ID" value="ENSRNOP00000006341.8"/>
    <property type="gene ID" value="ENSRNOG00000004680.8"/>
</dbReference>
<dbReference type="GeneID" id="311024"/>
<dbReference type="KEGG" id="rno:311024"/>
<dbReference type="UCSC" id="RGD:1308539">
    <property type="organism name" value="rat"/>
</dbReference>
<dbReference type="AGR" id="RGD:1308539"/>
<dbReference type="CTD" id="3800"/>
<dbReference type="RGD" id="1308539">
    <property type="gene designation" value="Kif5c"/>
</dbReference>
<dbReference type="VEuPathDB" id="HostDB:ENSRNOG00000004680"/>
<dbReference type="eggNOG" id="KOG0240">
    <property type="taxonomic scope" value="Eukaryota"/>
</dbReference>
<dbReference type="GeneTree" id="ENSGT00940000158539"/>
<dbReference type="HOGENOM" id="CLU_001485_11_1_1"/>
<dbReference type="InParanoid" id="P56536"/>
<dbReference type="OMA" id="QKSAEPY"/>
<dbReference type="OrthoDB" id="3176171at2759"/>
<dbReference type="PhylomeDB" id="P56536"/>
<dbReference type="TreeFam" id="TF105225"/>
<dbReference type="BRENDA" id="5.6.1.4">
    <property type="organism ID" value="5301"/>
</dbReference>
<dbReference type="EvolutionaryTrace" id="P56536"/>
<dbReference type="PRO" id="PR:P56536"/>
<dbReference type="Proteomes" id="UP000002494">
    <property type="component" value="Chromosome 3"/>
</dbReference>
<dbReference type="Proteomes" id="UP000234681">
    <property type="component" value="Chromosome 3"/>
</dbReference>
<dbReference type="Bgee" id="ENSRNOG00000004680">
    <property type="expression patterns" value="Expressed in frontal cortex and 16 other cell types or tissues"/>
</dbReference>
<dbReference type="GO" id="GO:1904115">
    <property type="term" value="C:axon cytoplasm"/>
    <property type="evidence" value="ECO:0007669"/>
    <property type="project" value="GOC"/>
</dbReference>
<dbReference type="GO" id="GO:0044295">
    <property type="term" value="C:axonal growth cone"/>
    <property type="evidence" value="ECO:0000266"/>
    <property type="project" value="RGD"/>
</dbReference>
<dbReference type="GO" id="GO:0035253">
    <property type="term" value="C:ciliary rootlet"/>
    <property type="evidence" value="ECO:0000266"/>
    <property type="project" value="RGD"/>
</dbReference>
<dbReference type="GO" id="GO:0005737">
    <property type="term" value="C:cytoplasm"/>
    <property type="evidence" value="ECO:0000266"/>
    <property type="project" value="RGD"/>
</dbReference>
<dbReference type="GO" id="GO:0030425">
    <property type="term" value="C:dendrite"/>
    <property type="evidence" value="ECO:0000314"/>
    <property type="project" value="RGD"/>
</dbReference>
<dbReference type="GO" id="GO:0032839">
    <property type="term" value="C:dendrite cytoplasm"/>
    <property type="evidence" value="ECO:0007669"/>
    <property type="project" value="GOC"/>
</dbReference>
<dbReference type="GO" id="GO:0150034">
    <property type="term" value="C:distal axon"/>
    <property type="evidence" value="ECO:0000266"/>
    <property type="project" value="RGD"/>
</dbReference>
<dbReference type="GO" id="GO:0098982">
    <property type="term" value="C:GABA-ergic synapse"/>
    <property type="evidence" value="ECO:0000314"/>
    <property type="project" value="SynGO"/>
</dbReference>
<dbReference type="GO" id="GO:0005874">
    <property type="term" value="C:microtubule"/>
    <property type="evidence" value="ECO:0007669"/>
    <property type="project" value="UniProtKB-KW"/>
</dbReference>
<dbReference type="GO" id="GO:0043005">
    <property type="term" value="C:neuron projection"/>
    <property type="evidence" value="ECO:0000266"/>
    <property type="project" value="RGD"/>
</dbReference>
<dbReference type="GO" id="GO:0043025">
    <property type="term" value="C:neuronal cell body"/>
    <property type="evidence" value="ECO:0000266"/>
    <property type="project" value="RGD"/>
</dbReference>
<dbReference type="GO" id="GO:0099524">
    <property type="term" value="C:postsynaptic cytosol"/>
    <property type="evidence" value="ECO:0000314"/>
    <property type="project" value="SynGO"/>
</dbReference>
<dbReference type="GO" id="GO:0034190">
    <property type="term" value="F:apolipoprotein receptor binding"/>
    <property type="evidence" value="ECO:0000353"/>
    <property type="project" value="RGD"/>
</dbReference>
<dbReference type="GO" id="GO:0005524">
    <property type="term" value="F:ATP binding"/>
    <property type="evidence" value="ECO:0007669"/>
    <property type="project" value="UniProtKB-KW"/>
</dbReference>
<dbReference type="GO" id="GO:0016887">
    <property type="term" value="F:ATP hydrolysis activity"/>
    <property type="evidence" value="ECO:0000314"/>
    <property type="project" value="RGD"/>
</dbReference>
<dbReference type="GO" id="GO:0008017">
    <property type="term" value="F:microtubule binding"/>
    <property type="evidence" value="ECO:0000314"/>
    <property type="project" value="RGD"/>
</dbReference>
<dbReference type="GO" id="GO:0003777">
    <property type="term" value="F:microtubule motor activity"/>
    <property type="evidence" value="ECO:0007669"/>
    <property type="project" value="InterPro"/>
</dbReference>
<dbReference type="GO" id="GO:0099641">
    <property type="term" value="P:anterograde axonal protein transport"/>
    <property type="evidence" value="ECO:0000315"/>
    <property type="project" value="UniProtKB"/>
</dbReference>
<dbReference type="GO" id="GO:0098964">
    <property type="term" value="P:anterograde dendritic transport of messenger ribonucleoprotein complex"/>
    <property type="evidence" value="ECO:0000266"/>
    <property type="project" value="RGD"/>
</dbReference>
<dbReference type="GO" id="GO:0008298">
    <property type="term" value="P:intracellular mRNA localization"/>
    <property type="evidence" value="ECO:0000315"/>
    <property type="project" value="RGD"/>
</dbReference>
<dbReference type="GO" id="GO:0008045">
    <property type="term" value="P:motor neuron axon guidance"/>
    <property type="evidence" value="ECO:0000266"/>
    <property type="project" value="RGD"/>
</dbReference>
<dbReference type="GO" id="GO:0051028">
    <property type="term" value="P:mRNA transport"/>
    <property type="evidence" value="ECO:0000250"/>
    <property type="project" value="UniProtKB"/>
</dbReference>
<dbReference type="CDD" id="cd23649">
    <property type="entry name" value="Khc_CBD_cc"/>
    <property type="match status" value="1"/>
</dbReference>
<dbReference type="CDD" id="cd01369">
    <property type="entry name" value="KISc_KHC_KIF5"/>
    <property type="match status" value="1"/>
</dbReference>
<dbReference type="FunFam" id="3.40.850.10:FF:000009">
    <property type="entry name" value="Kinesin-like protein"/>
    <property type="match status" value="1"/>
</dbReference>
<dbReference type="Gene3D" id="6.10.250.1590">
    <property type="match status" value="1"/>
</dbReference>
<dbReference type="Gene3D" id="3.40.850.10">
    <property type="entry name" value="Kinesin motor domain"/>
    <property type="match status" value="1"/>
</dbReference>
<dbReference type="InterPro" id="IPR027640">
    <property type="entry name" value="Kinesin-like_fam"/>
</dbReference>
<dbReference type="InterPro" id="IPR019821">
    <property type="entry name" value="Kinesin_motor_CS"/>
</dbReference>
<dbReference type="InterPro" id="IPR001752">
    <property type="entry name" value="Kinesin_motor_dom"/>
</dbReference>
<dbReference type="InterPro" id="IPR036961">
    <property type="entry name" value="Kinesin_motor_dom_sf"/>
</dbReference>
<dbReference type="InterPro" id="IPR027417">
    <property type="entry name" value="P-loop_NTPase"/>
</dbReference>
<dbReference type="PANTHER" id="PTHR47968">
    <property type="entry name" value="CENTROMERE PROTEIN E"/>
    <property type="match status" value="1"/>
</dbReference>
<dbReference type="PANTHER" id="PTHR47968:SF70">
    <property type="entry name" value="KINESIN HEAVY CHAIN ISOFORM 5C"/>
    <property type="match status" value="1"/>
</dbReference>
<dbReference type="Pfam" id="PF00225">
    <property type="entry name" value="Kinesin"/>
    <property type="match status" value="1"/>
</dbReference>
<dbReference type="PRINTS" id="PR00380">
    <property type="entry name" value="KINESINHEAVY"/>
</dbReference>
<dbReference type="SMART" id="SM00129">
    <property type="entry name" value="KISc"/>
    <property type="match status" value="1"/>
</dbReference>
<dbReference type="SUPFAM" id="SSF52540">
    <property type="entry name" value="P-loop containing nucleoside triphosphate hydrolases"/>
    <property type="match status" value="1"/>
</dbReference>
<dbReference type="PROSITE" id="PS00411">
    <property type="entry name" value="KINESIN_MOTOR_1"/>
    <property type="match status" value="1"/>
</dbReference>
<dbReference type="PROSITE" id="PS50067">
    <property type="entry name" value="KINESIN_MOTOR_2"/>
    <property type="match status" value="1"/>
</dbReference>
<sequence>MADPAECSIKVMCRFRPLNEAEILRGDKFIPKFKGEETVVIGQGKPYVFDRVLPPNTTQEQVYNACAKQIVKDVLEGYNGTIFAYGQTSSGKTHTMEGKLHDPQLMGIIPRIAHDIFDHIYSMDENLEFHIKVSYFEIYLDKIRDLLDVSKTNLAVHEDKNRVPYVKGCTERFVSSPEEVMDVIDEGKANRHVAVTNMNEHSSRSHSIFLINIKQENVETEKKLSGKLYLVDLAGSEKVSKTGAEGAVLDEAKNINKSLSALGNVISALAEGTKTHVPYRDSKMTRILQDSLGGNCRTTIVICCSPSVFNEAETKSTLMFGQRAKTIKNTVSVNLELTAEEWKKKYEKEKEKNKALKSVIQHLEVELNRWRNGEAVPEDEQISAKDQKNLEPCDNTPIIDNITPVVDGISAEKEKYDEEITSLYRQLDDKDDEINQQSQLAEKLKQQMLDQDELLASTRRDYEKIQEELTRLQIENEAAKDEVKEVLQALEELAVNYDQKSQEVEDKTRANEQLTDELAQKTTTLTTTQRELSQLQELSNHQKKRATEILNLLLKDLGEIGGIIGTNDVKTLADVNGVIEEEFTMARLYISKMKSEVKSLVNRSKQLESAQTDSNRKMNASERELAACQLLISQHEAKIKSLTDYMQNMEQKRRQLEESQDSLSEELAKLRAQEKMHEVSFQDKEKEHLTRLQDAEEVKKALEQQMESHREAHQKQLSRLRDEIEEKQRIIDEIRDLNQKLQLEQERLSSDYNKLKIEDQEREVKLEKLLLLNDKREQAREDLKGLEETVSRELQTLHNLRKLFVQDLTTRVKKSVELDSDDGGGSAAQKQKISFLENNLEQLTKVHKQLVRDNADLRCELPKLEKRLRATAERVKALESALKEAKENAMRDRKRYQQEVDRIKEAVRAKNMARRAHSAQIAKPIRPGHYPASSPTAVHAVRGGGGSSNSTHYQK</sequence>
<feature type="chain" id="PRO_0000125357" description="Kinesin heavy chain isoform 5C">
    <location>
        <begin position="1"/>
        <end position="955"/>
    </location>
</feature>
<feature type="domain" description="Kinesin motor" evidence="4">
    <location>
        <begin position="8"/>
        <end position="327"/>
    </location>
</feature>
<feature type="region of interest" description="Microtubule-binding">
    <location>
        <begin position="174"/>
        <end position="315"/>
    </location>
</feature>
<feature type="region of interest" description="Globular">
    <location>
        <begin position="859"/>
        <end position="955"/>
    </location>
</feature>
<feature type="region of interest" description="Disordered" evidence="5">
    <location>
        <begin position="909"/>
        <end position="955"/>
    </location>
</feature>
<feature type="coiled-coil region" evidence="3">
    <location>
        <begin position="332"/>
        <end position="366"/>
    </location>
</feature>
<feature type="coiled-coil region" evidence="3">
    <location>
        <begin position="413"/>
        <end position="538"/>
    </location>
</feature>
<feature type="coiled-coil region" evidence="3">
    <location>
        <begin position="590"/>
        <end position="913"/>
    </location>
</feature>
<feature type="binding site" evidence="8 11">
    <location>
        <position position="87"/>
    </location>
    <ligand>
        <name>ATP</name>
        <dbReference type="ChEBI" id="CHEBI:30616"/>
    </ligand>
</feature>
<feature type="binding site" evidence="8 11">
    <location>
        <position position="89"/>
    </location>
    <ligand>
        <name>ATP</name>
        <dbReference type="ChEBI" id="CHEBI:30616"/>
    </ligand>
</feature>
<feature type="binding site" evidence="8 11">
    <location>
        <position position="90"/>
    </location>
    <ligand>
        <name>ATP</name>
        <dbReference type="ChEBI" id="CHEBI:30616"/>
    </ligand>
</feature>
<feature type="binding site" evidence="8 11">
    <location>
        <position position="91"/>
    </location>
    <ligand>
        <name>ATP</name>
        <dbReference type="ChEBI" id="CHEBI:30616"/>
    </ligand>
</feature>
<feature type="binding site" evidence="8 11">
    <location>
        <position position="92"/>
    </location>
    <ligand>
        <name>ATP</name>
        <dbReference type="ChEBI" id="CHEBI:30616"/>
    </ligand>
</feature>
<feature type="binding site" evidence="8 11">
    <location>
        <position position="93"/>
    </location>
    <ligand>
        <name>ATP</name>
        <dbReference type="ChEBI" id="CHEBI:30616"/>
    </ligand>
</feature>
<feature type="binding site" evidence="8 11">
    <location>
        <position position="94"/>
    </location>
    <ligand>
        <name>ATP</name>
        <dbReference type="ChEBI" id="CHEBI:30616"/>
    </ligand>
</feature>
<feature type="binding site" evidence="8 11">
    <location>
        <position position="99"/>
    </location>
    <ligand>
        <name>ATP</name>
        <dbReference type="ChEBI" id="CHEBI:30616"/>
    </ligand>
</feature>
<feature type="modified residue" description="Phosphothreonine" evidence="2">
    <location>
        <position position="403"/>
    </location>
</feature>
<feature type="strand" evidence="16">
    <location>
        <begin position="5"/>
        <end position="8"/>
    </location>
</feature>
<feature type="strand" evidence="16">
    <location>
        <begin position="10"/>
        <end position="15"/>
    </location>
</feature>
<feature type="helix" evidence="16">
    <location>
        <begin position="20"/>
        <end position="24"/>
    </location>
</feature>
<feature type="strand" evidence="16">
    <location>
        <begin position="31"/>
        <end position="34"/>
    </location>
</feature>
<feature type="turn" evidence="16">
    <location>
        <begin position="35"/>
        <end position="37"/>
    </location>
</feature>
<feature type="strand" evidence="16">
    <location>
        <begin position="38"/>
        <end position="41"/>
    </location>
</feature>
<feature type="strand" evidence="17">
    <location>
        <begin position="43"/>
        <end position="45"/>
    </location>
</feature>
<feature type="strand" evidence="16">
    <location>
        <begin position="50"/>
        <end position="53"/>
    </location>
</feature>
<feature type="helix" evidence="16">
    <location>
        <begin position="59"/>
        <end position="66"/>
    </location>
</feature>
<feature type="helix" evidence="16">
    <location>
        <begin position="68"/>
        <end position="75"/>
    </location>
</feature>
<feature type="strand" evidence="16">
    <location>
        <begin position="79"/>
        <end position="85"/>
    </location>
</feature>
<feature type="helix" evidence="16">
    <location>
        <begin position="92"/>
        <end position="96"/>
    </location>
</feature>
<feature type="turn" evidence="16">
    <location>
        <begin position="103"/>
        <end position="105"/>
    </location>
</feature>
<feature type="helix" evidence="16">
    <location>
        <begin position="108"/>
        <end position="121"/>
    </location>
</feature>
<feature type="strand" evidence="16">
    <location>
        <begin position="127"/>
        <end position="139"/>
    </location>
</feature>
<feature type="strand" evidence="16">
    <location>
        <begin position="142"/>
        <end position="145"/>
    </location>
</feature>
<feature type="strand" evidence="16">
    <location>
        <begin position="156"/>
        <end position="158"/>
    </location>
</feature>
<feature type="strand" evidence="17">
    <location>
        <begin position="160"/>
        <end position="162"/>
    </location>
</feature>
<feature type="strand" evidence="16">
    <location>
        <begin position="164"/>
        <end position="166"/>
    </location>
</feature>
<feature type="strand" evidence="16">
    <location>
        <begin position="172"/>
        <end position="174"/>
    </location>
</feature>
<feature type="helix" evidence="16">
    <location>
        <begin position="177"/>
        <end position="192"/>
    </location>
</feature>
<feature type="helix" evidence="16">
    <location>
        <begin position="198"/>
        <end position="204"/>
    </location>
</feature>
<feature type="strand" evidence="16">
    <location>
        <begin position="205"/>
        <end position="217"/>
    </location>
</feature>
<feature type="turn" evidence="16">
    <location>
        <begin position="218"/>
        <end position="220"/>
    </location>
</feature>
<feature type="strand" evidence="16">
    <location>
        <begin position="223"/>
        <end position="232"/>
    </location>
</feature>
<feature type="helix" evidence="17">
    <location>
        <begin position="258"/>
        <end position="269"/>
    </location>
</feature>
<feature type="helix" evidence="17">
    <location>
        <begin position="279"/>
        <end position="281"/>
    </location>
</feature>
<feature type="helix" evidence="17">
    <location>
        <begin position="283"/>
        <end position="287"/>
    </location>
</feature>
<feature type="helix" evidence="17">
    <location>
        <begin position="288"/>
        <end position="291"/>
    </location>
</feature>
<feature type="strand" evidence="17">
    <location>
        <begin position="297"/>
        <end position="304"/>
    </location>
</feature>
<feature type="helix" evidence="17">
    <location>
        <begin position="311"/>
        <end position="319"/>
    </location>
</feature>
<feature type="helix" evidence="18">
    <location>
        <begin position="339"/>
        <end position="371"/>
    </location>
</feature>
<reference key="1">
    <citation type="journal article" date="2004" name="Nature">
        <title>Genome sequence of the Brown Norway rat yields insights into mammalian evolution.</title>
        <authorList>
            <person name="Gibbs R.A."/>
            <person name="Weinstock G.M."/>
            <person name="Metzker M.L."/>
            <person name="Muzny D.M."/>
            <person name="Sodergren E.J."/>
            <person name="Scherer S."/>
            <person name="Scott G."/>
            <person name="Steffen D."/>
            <person name="Worley K.C."/>
            <person name="Burch P.E."/>
            <person name="Okwuonu G."/>
            <person name="Hines S."/>
            <person name="Lewis L."/>
            <person name="Deramo C."/>
            <person name="Delgado O."/>
            <person name="Dugan-Rocha S."/>
            <person name="Miner G."/>
            <person name="Morgan M."/>
            <person name="Hawes A."/>
            <person name="Gill R."/>
            <person name="Holt R.A."/>
            <person name="Adams M.D."/>
            <person name="Amanatides P.G."/>
            <person name="Baden-Tillson H."/>
            <person name="Barnstead M."/>
            <person name="Chin S."/>
            <person name="Evans C.A."/>
            <person name="Ferriera S."/>
            <person name="Fosler C."/>
            <person name="Glodek A."/>
            <person name="Gu Z."/>
            <person name="Jennings D."/>
            <person name="Kraft C.L."/>
            <person name="Nguyen T."/>
            <person name="Pfannkoch C.M."/>
            <person name="Sitter C."/>
            <person name="Sutton G.G."/>
            <person name="Venter J.C."/>
            <person name="Woodage T."/>
            <person name="Smith D."/>
            <person name="Lee H.-M."/>
            <person name="Gustafson E."/>
            <person name="Cahill P."/>
            <person name="Kana A."/>
            <person name="Doucette-Stamm L."/>
            <person name="Weinstock K."/>
            <person name="Fechtel K."/>
            <person name="Weiss R.B."/>
            <person name="Dunn D.M."/>
            <person name="Green E.D."/>
            <person name="Blakesley R.W."/>
            <person name="Bouffard G.G."/>
            <person name="De Jong P.J."/>
            <person name="Osoegawa K."/>
            <person name="Zhu B."/>
            <person name="Marra M."/>
            <person name="Schein J."/>
            <person name="Bosdet I."/>
            <person name="Fjell C."/>
            <person name="Jones S."/>
            <person name="Krzywinski M."/>
            <person name="Mathewson C."/>
            <person name="Siddiqui A."/>
            <person name="Wye N."/>
            <person name="McPherson J."/>
            <person name="Zhao S."/>
            <person name="Fraser C.M."/>
            <person name="Shetty J."/>
            <person name="Shatsman S."/>
            <person name="Geer K."/>
            <person name="Chen Y."/>
            <person name="Abramzon S."/>
            <person name="Nierman W.C."/>
            <person name="Havlak P.H."/>
            <person name="Chen R."/>
            <person name="Durbin K.J."/>
            <person name="Egan A."/>
            <person name="Ren Y."/>
            <person name="Song X.-Z."/>
            <person name="Li B."/>
            <person name="Liu Y."/>
            <person name="Qin X."/>
            <person name="Cawley S."/>
            <person name="Cooney A.J."/>
            <person name="D'Souza L.M."/>
            <person name="Martin K."/>
            <person name="Wu J.Q."/>
            <person name="Gonzalez-Garay M.L."/>
            <person name="Jackson A.R."/>
            <person name="Kalafus K.J."/>
            <person name="McLeod M.P."/>
            <person name="Milosavljevic A."/>
            <person name="Virk D."/>
            <person name="Volkov A."/>
            <person name="Wheeler D.A."/>
            <person name="Zhang Z."/>
            <person name="Bailey J.A."/>
            <person name="Eichler E.E."/>
            <person name="Tuzun E."/>
            <person name="Birney E."/>
            <person name="Mongin E."/>
            <person name="Ureta-Vidal A."/>
            <person name="Woodwark C."/>
            <person name="Zdobnov E."/>
            <person name="Bork P."/>
            <person name="Suyama M."/>
            <person name="Torrents D."/>
            <person name="Alexandersson M."/>
            <person name="Trask B.J."/>
            <person name="Young J.M."/>
            <person name="Huang H."/>
            <person name="Wang H."/>
            <person name="Xing H."/>
            <person name="Daniels S."/>
            <person name="Gietzen D."/>
            <person name="Schmidt J."/>
            <person name="Stevens K."/>
            <person name="Vitt U."/>
            <person name="Wingrove J."/>
            <person name="Camara F."/>
            <person name="Mar Alba M."/>
            <person name="Abril J.F."/>
            <person name="Guigo R."/>
            <person name="Smit A."/>
            <person name="Dubchak I."/>
            <person name="Rubin E.M."/>
            <person name="Couronne O."/>
            <person name="Poliakov A."/>
            <person name="Huebner N."/>
            <person name="Ganten D."/>
            <person name="Goesele C."/>
            <person name="Hummel O."/>
            <person name="Kreitler T."/>
            <person name="Lee Y.-A."/>
            <person name="Monti J."/>
            <person name="Schulz H."/>
            <person name="Zimdahl H."/>
            <person name="Himmelbauer H."/>
            <person name="Lehrach H."/>
            <person name="Jacob H.J."/>
            <person name="Bromberg S."/>
            <person name="Gullings-Handley J."/>
            <person name="Jensen-Seaman M.I."/>
            <person name="Kwitek A.E."/>
            <person name="Lazar J."/>
            <person name="Pasko D."/>
            <person name="Tonellato P.J."/>
            <person name="Twigger S."/>
            <person name="Ponting C.P."/>
            <person name="Duarte J.M."/>
            <person name="Rice S."/>
            <person name="Goodstadt L."/>
            <person name="Beatson S.A."/>
            <person name="Emes R.D."/>
            <person name="Winter E.E."/>
            <person name="Webber C."/>
            <person name="Brandt P."/>
            <person name="Nyakatura G."/>
            <person name="Adetobi M."/>
            <person name="Chiaromonte F."/>
            <person name="Elnitski L."/>
            <person name="Eswara P."/>
            <person name="Hardison R.C."/>
            <person name="Hou M."/>
            <person name="Kolbe D."/>
            <person name="Makova K."/>
            <person name="Miller W."/>
            <person name="Nekrutenko A."/>
            <person name="Riemer C."/>
            <person name="Schwartz S."/>
            <person name="Taylor J."/>
            <person name="Yang S."/>
            <person name="Zhang Y."/>
            <person name="Lindpaintner K."/>
            <person name="Andrews T.D."/>
            <person name="Caccamo M."/>
            <person name="Clamp M."/>
            <person name="Clarke L."/>
            <person name="Curwen V."/>
            <person name="Durbin R.M."/>
            <person name="Eyras E."/>
            <person name="Searle S.M."/>
            <person name="Cooper G.M."/>
            <person name="Batzoglou S."/>
            <person name="Brudno M."/>
            <person name="Sidow A."/>
            <person name="Stone E.A."/>
            <person name="Payseur B.A."/>
            <person name="Bourque G."/>
            <person name="Lopez-Otin C."/>
            <person name="Puente X.S."/>
            <person name="Chakrabarti K."/>
            <person name="Chatterji S."/>
            <person name="Dewey C."/>
            <person name="Pachter L."/>
            <person name="Bray N."/>
            <person name="Yap V.B."/>
            <person name="Caspi A."/>
            <person name="Tesler G."/>
            <person name="Pevzner P.A."/>
            <person name="Haussler D."/>
            <person name="Roskin K.M."/>
            <person name="Baertsch R."/>
            <person name="Clawson H."/>
            <person name="Furey T.S."/>
            <person name="Hinrichs A.S."/>
            <person name="Karolchik D."/>
            <person name="Kent W.J."/>
            <person name="Rosenbloom K.R."/>
            <person name="Trumbower H."/>
            <person name="Weirauch M."/>
            <person name="Cooper D.N."/>
            <person name="Stenson P.D."/>
            <person name="Ma B."/>
            <person name="Brent M."/>
            <person name="Arumugam M."/>
            <person name="Shteynberg D."/>
            <person name="Copley R.R."/>
            <person name="Taylor M.S."/>
            <person name="Riethman H."/>
            <person name="Mudunuri U."/>
            <person name="Peterson J."/>
            <person name="Guyer M."/>
            <person name="Felsenfeld A."/>
            <person name="Old S."/>
            <person name="Mockrin S."/>
            <person name="Collins F.S."/>
        </authorList>
    </citation>
    <scope>NUCLEOTIDE SEQUENCE [LARGE SCALE GENOMIC DNA]</scope>
    <source>
        <strain>Brown Norway</strain>
    </source>
</reference>
<reference key="2">
    <citation type="submission" date="2005-09" db="EMBL/GenBank/DDBJ databases">
        <authorList>
            <person name="Mural R.J."/>
            <person name="Adams M.D."/>
            <person name="Myers E.W."/>
            <person name="Smith H.O."/>
            <person name="Venter J.C."/>
        </authorList>
    </citation>
    <scope>NUCLEOTIDE SEQUENCE [LARGE SCALE GENOMIC DNA]</scope>
</reference>
<reference key="3">
    <citation type="journal article" date="2001" name="Biol. Reprod.">
        <title>Kinesin light-chain KLC3 expression in testis is restricted to spermatids.</title>
        <authorList>
            <person name="Junco A."/>
            <person name="Bhullar B."/>
            <person name="Tarnasky H.A."/>
            <person name="van der Hoorn F.A."/>
        </authorList>
    </citation>
    <scope>INTERACTION WITH KLC3</scope>
</reference>
<reference key="4">
    <citation type="journal article" date="2012" name="Nat. Commun.">
        <title>Quantitative maps of protein phosphorylation sites across 14 different rat organs and tissues.</title>
        <authorList>
            <person name="Lundby A."/>
            <person name="Secher A."/>
            <person name="Lage K."/>
            <person name="Nordsborg N.B."/>
            <person name="Dmytriyev A."/>
            <person name="Lundby C."/>
            <person name="Olsen J.V."/>
        </authorList>
    </citation>
    <scope>IDENTIFICATION BY MASS SPECTROMETRY [LARGE SCALE ANALYSIS]</scope>
</reference>
<reference key="5">
    <citation type="journal article" date="2013" name="J. Biol. Chem.">
        <title>c-Jun NH2-terminal kinase (JNK)-interacting protein-3 (JIP3) regulates neuronal axon elongation in a kinesin- and JNK-dependent manner.</title>
        <authorList>
            <person name="Sun T."/>
            <person name="Yu N."/>
            <person name="Zhai L.K."/>
            <person name="Li N."/>
            <person name="Zhang C."/>
            <person name="Zhou L."/>
            <person name="Huang Z."/>
            <person name="Jiang X.Y."/>
            <person name="Shen Y."/>
            <person name="Chen Z.Y."/>
        </authorList>
    </citation>
    <scope>FUNCTION</scope>
</reference>
<reference key="6">
    <citation type="journal article" date="1997" name="Biochemistry">
        <title>X-ray structure of motor and neck domains from rat brain kinesin.</title>
        <authorList>
            <person name="Sack S."/>
            <person name="Mueller J."/>
            <person name="Marx A."/>
            <person name="Thormaehlen M."/>
            <person name="Mandelkow E.M."/>
            <person name="Brady S.T."/>
            <person name="Mandelkow E."/>
        </authorList>
    </citation>
    <scope>X-RAY CRYSTALLOGRAPHY (1.9 ANGSTROMS) OF 2-239</scope>
    <source>
        <tissue>Brain</tissue>
    </source>
</reference>
<reference key="7">
    <citation type="journal article" date="1997" name="Cell">
        <title>The crystal structure of dimeric kinesin and implications for microtubule-dependent motility.</title>
        <authorList>
            <person name="Kozielski F."/>
            <person name="Sack S."/>
            <person name="Marx A."/>
            <person name="Thormahlen M."/>
            <person name="Schonbrunn E."/>
            <person name="Biou V."/>
            <person name="Thompson A."/>
            <person name="Mandelkow E.M."/>
            <person name="Mandelkow E."/>
        </authorList>
    </citation>
    <scope>X-RAY CRYSTALLOGRAPHY (3.1 ANGSTROMS) OF 2-239</scope>
</reference>
<reference evidence="11 12 13 14 15" key="8">
    <citation type="journal article" date="2016" name="Structure">
        <title>Structural Basis of Backwards Motion in Kinesin-1-Kinesin-14 Chimera: Implication for Kinesin-14 Motility.</title>
        <authorList>
            <person name="Yamagishi M."/>
            <person name="Shigematsu H."/>
            <person name="Yokoyama T."/>
            <person name="Kikkawa M."/>
            <person name="Sugawa M."/>
            <person name="Aoki M."/>
            <person name="Shirouzu M."/>
            <person name="Yajima J."/>
            <person name="Nitta R."/>
        </authorList>
    </citation>
    <scope>STRUCTURE BY ELECTRON MICROSCOPY (2.90 ANGSTROMS) OF 10-320 OF CHIMERIC CONSTRUCT WITH DROSOPHILA NCD IN COMPLEX WITH ADP AND TUBULIN</scope>
    <scope>FUNCTION</scope>
    <scope>CATALYTIC ACTIVITY</scope>
    <scope>BIOPHYSICOCHEMICAL PROPERTIES</scope>
</reference>
<evidence type="ECO:0000250" key="1">
    <source>
        <dbReference type="UniProtKB" id="O60282"/>
    </source>
</evidence>
<evidence type="ECO:0000250" key="2">
    <source>
        <dbReference type="UniProtKB" id="P28738"/>
    </source>
</evidence>
<evidence type="ECO:0000255" key="3"/>
<evidence type="ECO:0000255" key="4">
    <source>
        <dbReference type="PROSITE-ProRule" id="PRU00283"/>
    </source>
</evidence>
<evidence type="ECO:0000256" key="5">
    <source>
        <dbReference type="SAM" id="MobiDB-lite"/>
    </source>
</evidence>
<evidence type="ECO:0000269" key="6">
    <source>
    </source>
</evidence>
<evidence type="ECO:0000269" key="7">
    <source>
    </source>
</evidence>
<evidence type="ECO:0000269" key="8">
    <source>
    </source>
</evidence>
<evidence type="ECO:0000303" key="9">
    <source>
    </source>
</evidence>
<evidence type="ECO:0000305" key="10"/>
<evidence type="ECO:0007744" key="11">
    <source>
        <dbReference type="PDB" id="5HLE"/>
    </source>
</evidence>
<evidence type="ECO:0007744" key="12">
    <source>
        <dbReference type="PDB" id="5HNW"/>
    </source>
</evidence>
<evidence type="ECO:0007744" key="13">
    <source>
        <dbReference type="PDB" id="5HNX"/>
    </source>
</evidence>
<evidence type="ECO:0007744" key="14">
    <source>
        <dbReference type="PDB" id="5HNY"/>
    </source>
</evidence>
<evidence type="ECO:0007744" key="15">
    <source>
        <dbReference type="PDB" id="5HNZ"/>
    </source>
</evidence>
<evidence type="ECO:0007829" key="16">
    <source>
        <dbReference type="PDB" id="2KIN"/>
    </source>
</evidence>
<evidence type="ECO:0007829" key="17">
    <source>
        <dbReference type="PDB" id="5HLE"/>
    </source>
</evidence>
<evidence type="ECO:0007829" key="18">
    <source>
        <dbReference type="PDB" id="8TT7"/>
    </source>
</evidence>
<gene>
    <name type="primary">Kif5c</name>
    <name type="synonym">Nkhc2</name>
</gene>
<name>KIF5C_RAT</name>
<protein>
    <recommendedName>
        <fullName>Kinesin heavy chain isoform 5C</fullName>
        <ecNumber evidence="8">3.6.4.-</ecNumber>
    </recommendedName>
    <alternativeName>
        <fullName>Kinesin heavy chain neuron-specific 2</fullName>
    </alternativeName>
    <alternativeName>
        <fullName evidence="9">Kinesin-1</fullName>
    </alternativeName>
</protein>
<organism>
    <name type="scientific">Rattus norvegicus</name>
    <name type="common">Rat</name>
    <dbReference type="NCBI Taxonomy" id="10116"/>
    <lineage>
        <taxon>Eukaryota</taxon>
        <taxon>Metazoa</taxon>
        <taxon>Chordata</taxon>
        <taxon>Craniata</taxon>
        <taxon>Vertebrata</taxon>
        <taxon>Euteleostomi</taxon>
        <taxon>Mammalia</taxon>
        <taxon>Eutheria</taxon>
        <taxon>Euarchontoglires</taxon>
        <taxon>Glires</taxon>
        <taxon>Rodentia</taxon>
        <taxon>Myomorpha</taxon>
        <taxon>Muroidea</taxon>
        <taxon>Muridae</taxon>
        <taxon>Murinae</taxon>
        <taxon>Rattus</taxon>
    </lineage>
</organism>
<comment type="function">
    <text evidence="1 2 7 8">Microtubule-associated force-producing protein that may play a role in organelle transport (By similarity). Has ATPase activity (PubMed:27452403). Involved in synaptic transmission (By similarity). Mediates dendritic trafficking of mRNAs (By similarity). Required for anterograde axonal transportation of MAPK8IP3/JIP3 which is essential for MAPK8IP3/JIP3 function in axon elongation (PubMed:23576431).</text>
</comment>
<comment type="catalytic activity">
    <reaction evidence="8">
        <text>ATP + H2O = ADP + phosphate + H(+)</text>
        <dbReference type="Rhea" id="RHEA:13065"/>
        <dbReference type="ChEBI" id="CHEBI:15377"/>
        <dbReference type="ChEBI" id="CHEBI:15378"/>
        <dbReference type="ChEBI" id="CHEBI:30616"/>
        <dbReference type="ChEBI" id="CHEBI:43474"/>
        <dbReference type="ChEBI" id="CHEBI:456216"/>
    </reaction>
</comment>
<comment type="biophysicochemical properties">
    <kinetics>
        <text evidence="8">kcat is 76 sec(-1) for ATPase activity.</text>
    </kinetics>
</comment>
<comment type="subunit">
    <text evidence="1 2 6">Oligomer composed of two heavy chains and two light chains. Interacts with GRIP1. Interacts with TRAK1. Interacts with ZFYVE27 (By similarity). Interacts with KLC3 (PubMed:11319135).</text>
</comment>
<comment type="interaction">
    <interactant intactId="EBI-994504">
        <id>P56536</id>
    </interactant>
    <interactant intactId="EBI-1396430">
        <id>Q8IXI2</id>
        <label>RHOT1</label>
    </interactant>
    <organismsDiffer>true</organismsDiffer>
    <experiments>5</experiments>
</comment>
<comment type="subcellular location">
    <subcellularLocation>
        <location evidence="10">Cytoplasm</location>
        <location evidence="10">Cytoskeleton</location>
    </subcellularLocation>
    <subcellularLocation>
        <location evidence="1">Cell projection</location>
        <location evidence="1">Dendrite</location>
    </subcellularLocation>
    <text evidence="1">Abundant in distal regions of dendrites.</text>
</comment>
<comment type="domain">
    <text>Composed of three structural domains: a large globular N-terminal domain which is responsible for the motor activity of kinesin (it hydrolyzes ATP and binds microtubule), a central alpha-helical coiled coil domain that mediates the heavy chain dimerization; and a small globular C-terminal domain which interacts with other proteins (such as the kinesin light chains), vesicles and membranous organelles.</text>
</comment>
<comment type="similarity">
    <text evidence="4">Belongs to the TRAFAC class myosin-kinesin ATPase superfamily. Kinesin family. Kinesin subfamily.</text>
</comment>
<keyword id="KW-0002">3D-structure</keyword>
<keyword id="KW-0067">ATP-binding</keyword>
<keyword id="KW-0966">Cell projection</keyword>
<keyword id="KW-0175">Coiled coil</keyword>
<keyword id="KW-0963">Cytoplasm</keyword>
<keyword id="KW-0206">Cytoskeleton</keyword>
<keyword id="KW-0378">Hydrolase</keyword>
<keyword id="KW-0493">Microtubule</keyword>
<keyword id="KW-0505">Motor protein</keyword>
<keyword id="KW-0547">Nucleotide-binding</keyword>
<keyword id="KW-0597">Phosphoprotein</keyword>
<keyword id="KW-1185">Reference proteome</keyword>
<keyword id="KW-0813">Transport</keyword>
<proteinExistence type="evidence at protein level"/>